<protein>
    <recommendedName>
        <fullName evidence="9 10">Ectonucleoside triphosphate diphosphohydrolase 5</fullName>
        <shortName>NTPDase 5</shortName>
        <ecNumber evidence="4 6">3.6.1.6</ecNumber>
    </recommendedName>
    <alternativeName>
        <fullName>CD39 antigen-like 4</fullName>
    </alternativeName>
    <alternativeName>
        <fullName evidence="7">ER-UDPase</fullName>
    </alternativeName>
    <alternativeName>
        <fullName>Guanosine-diphosphatase ENTPD5</fullName>
        <shortName>GDPase ENTPD5</shortName>
    </alternativeName>
    <alternativeName>
        <fullName>Nucleoside diphosphatase</fullName>
    </alternativeName>
    <alternativeName>
        <fullName>Uridine-diphosphatase ENTPD5</fullName>
        <shortName>UDPase ENTPD5</shortName>
    </alternativeName>
</protein>
<reference key="1">
    <citation type="journal article" date="1998" name="Mamm. Genome">
        <title>cDNA cloning and chromosomal mapping of a mouse gene with homology to NTPases.</title>
        <authorList>
            <person name="Chadwick B.P."/>
            <person name="Williamson J."/>
            <person name="Sheer D."/>
            <person name="Frischauf A.-M."/>
        </authorList>
    </citation>
    <scope>NUCLEOTIDE SEQUENCE [MRNA]</scope>
    <source>
        <tissue>Testis</tissue>
    </source>
</reference>
<reference key="2">
    <citation type="journal article" date="1999" name="EMBO J.">
        <title>Glycoprotein reglucosylation and nucleotide sugar utilization in the secretory pathway: identification of a nucleoside diphosphatase in the endoplasmic reticulum.</title>
        <authorList>
            <person name="Trombetta E.S."/>
            <person name="Helenius A."/>
        </authorList>
    </citation>
    <scope>NUCLEOTIDE SEQUENCE [MRNA]</scope>
    <scope>FUNCTION</scope>
    <scope>CATALYTIC ACTIVITY</scope>
    <scope>COFACTOR</scope>
    <scope>BIOPHYSICOCHEMICAL PROPERTIES</scope>
    <scope>SUBCELLULAR LOCATION</scope>
    <scope>GLYCOSYLATION</scope>
    <scope>TISSUE SPECIFICITY</scope>
    <source>
        <tissue>Liver</tissue>
    </source>
</reference>
<reference key="3">
    <citation type="journal article" date="1999" name="Mol. Carcinog.">
        <title>cDNA isolation, expression, and chromosomal localization of the mouse pcph proto-oncogene.</title>
        <authorList>
            <person name="Recio J.A."/>
            <person name="Zambrano N."/>
            <person name="de La Pena L."/>
            <person name="Powers C."/>
            <person name="Siwarski D."/>
            <person name="Huppi K."/>
            <person name="Notario V."/>
        </authorList>
    </citation>
    <scope>NUCLEOTIDE SEQUENCE [MRNA]</scope>
    <source>
        <strain>C57BL/6J</strain>
        <tissue>Thymus</tissue>
    </source>
</reference>
<reference key="4">
    <citation type="journal article" date="2005" name="Science">
        <title>The transcriptional landscape of the mammalian genome.</title>
        <authorList>
            <person name="Carninci P."/>
            <person name="Kasukawa T."/>
            <person name="Katayama S."/>
            <person name="Gough J."/>
            <person name="Frith M.C."/>
            <person name="Maeda N."/>
            <person name="Oyama R."/>
            <person name="Ravasi T."/>
            <person name="Lenhard B."/>
            <person name="Wells C."/>
            <person name="Kodzius R."/>
            <person name="Shimokawa K."/>
            <person name="Bajic V.B."/>
            <person name="Brenner S.E."/>
            <person name="Batalov S."/>
            <person name="Forrest A.R."/>
            <person name="Zavolan M."/>
            <person name="Davis M.J."/>
            <person name="Wilming L.G."/>
            <person name="Aidinis V."/>
            <person name="Allen J.E."/>
            <person name="Ambesi-Impiombato A."/>
            <person name="Apweiler R."/>
            <person name="Aturaliya R.N."/>
            <person name="Bailey T.L."/>
            <person name="Bansal M."/>
            <person name="Baxter L."/>
            <person name="Beisel K.W."/>
            <person name="Bersano T."/>
            <person name="Bono H."/>
            <person name="Chalk A.M."/>
            <person name="Chiu K.P."/>
            <person name="Choudhary V."/>
            <person name="Christoffels A."/>
            <person name="Clutterbuck D.R."/>
            <person name="Crowe M.L."/>
            <person name="Dalla E."/>
            <person name="Dalrymple B.P."/>
            <person name="de Bono B."/>
            <person name="Della Gatta G."/>
            <person name="di Bernardo D."/>
            <person name="Down T."/>
            <person name="Engstrom P."/>
            <person name="Fagiolini M."/>
            <person name="Faulkner G."/>
            <person name="Fletcher C.F."/>
            <person name="Fukushima T."/>
            <person name="Furuno M."/>
            <person name="Futaki S."/>
            <person name="Gariboldi M."/>
            <person name="Georgii-Hemming P."/>
            <person name="Gingeras T.R."/>
            <person name="Gojobori T."/>
            <person name="Green R.E."/>
            <person name="Gustincich S."/>
            <person name="Harbers M."/>
            <person name="Hayashi Y."/>
            <person name="Hensch T.K."/>
            <person name="Hirokawa N."/>
            <person name="Hill D."/>
            <person name="Huminiecki L."/>
            <person name="Iacono M."/>
            <person name="Ikeo K."/>
            <person name="Iwama A."/>
            <person name="Ishikawa T."/>
            <person name="Jakt M."/>
            <person name="Kanapin A."/>
            <person name="Katoh M."/>
            <person name="Kawasawa Y."/>
            <person name="Kelso J."/>
            <person name="Kitamura H."/>
            <person name="Kitano H."/>
            <person name="Kollias G."/>
            <person name="Krishnan S.P."/>
            <person name="Kruger A."/>
            <person name="Kummerfeld S.K."/>
            <person name="Kurochkin I.V."/>
            <person name="Lareau L.F."/>
            <person name="Lazarevic D."/>
            <person name="Lipovich L."/>
            <person name="Liu J."/>
            <person name="Liuni S."/>
            <person name="McWilliam S."/>
            <person name="Madan Babu M."/>
            <person name="Madera M."/>
            <person name="Marchionni L."/>
            <person name="Matsuda H."/>
            <person name="Matsuzawa S."/>
            <person name="Miki H."/>
            <person name="Mignone F."/>
            <person name="Miyake S."/>
            <person name="Morris K."/>
            <person name="Mottagui-Tabar S."/>
            <person name="Mulder N."/>
            <person name="Nakano N."/>
            <person name="Nakauchi H."/>
            <person name="Ng P."/>
            <person name="Nilsson R."/>
            <person name="Nishiguchi S."/>
            <person name="Nishikawa S."/>
            <person name="Nori F."/>
            <person name="Ohara O."/>
            <person name="Okazaki Y."/>
            <person name="Orlando V."/>
            <person name="Pang K.C."/>
            <person name="Pavan W.J."/>
            <person name="Pavesi G."/>
            <person name="Pesole G."/>
            <person name="Petrovsky N."/>
            <person name="Piazza S."/>
            <person name="Reed J."/>
            <person name="Reid J.F."/>
            <person name="Ring B.Z."/>
            <person name="Ringwald M."/>
            <person name="Rost B."/>
            <person name="Ruan Y."/>
            <person name="Salzberg S.L."/>
            <person name="Sandelin A."/>
            <person name="Schneider C."/>
            <person name="Schoenbach C."/>
            <person name="Sekiguchi K."/>
            <person name="Semple C.A."/>
            <person name="Seno S."/>
            <person name="Sessa L."/>
            <person name="Sheng Y."/>
            <person name="Shibata Y."/>
            <person name="Shimada H."/>
            <person name="Shimada K."/>
            <person name="Silva D."/>
            <person name="Sinclair B."/>
            <person name="Sperling S."/>
            <person name="Stupka E."/>
            <person name="Sugiura K."/>
            <person name="Sultana R."/>
            <person name="Takenaka Y."/>
            <person name="Taki K."/>
            <person name="Tammoja K."/>
            <person name="Tan S.L."/>
            <person name="Tang S."/>
            <person name="Taylor M.S."/>
            <person name="Tegner J."/>
            <person name="Teichmann S.A."/>
            <person name="Ueda H.R."/>
            <person name="van Nimwegen E."/>
            <person name="Verardo R."/>
            <person name="Wei C.L."/>
            <person name="Yagi K."/>
            <person name="Yamanishi H."/>
            <person name="Zabarovsky E."/>
            <person name="Zhu S."/>
            <person name="Zimmer A."/>
            <person name="Hide W."/>
            <person name="Bult C."/>
            <person name="Grimmond S.M."/>
            <person name="Teasdale R.D."/>
            <person name="Liu E.T."/>
            <person name="Brusic V."/>
            <person name="Quackenbush J."/>
            <person name="Wahlestedt C."/>
            <person name="Mattick J.S."/>
            <person name="Hume D.A."/>
            <person name="Kai C."/>
            <person name="Sasaki D."/>
            <person name="Tomaru Y."/>
            <person name="Fukuda S."/>
            <person name="Kanamori-Katayama M."/>
            <person name="Suzuki M."/>
            <person name="Aoki J."/>
            <person name="Arakawa T."/>
            <person name="Iida J."/>
            <person name="Imamura K."/>
            <person name="Itoh M."/>
            <person name="Kato T."/>
            <person name="Kawaji H."/>
            <person name="Kawagashira N."/>
            <person name="Kawashima T."/>
            <person name="Kojima M."/>
            <person name="Kondo S."/>
            <person name="Konno H."/>
            <person name="Nakano K."/>
            <person name="Ninomiya N."/>
            <person name="Nishio T."/>
            <person name="Okada M."/>
            <person name="Plessy C."/>
            <person name="Shibata K."/>
            <person name="Shiraki T."/>
            <person name="Suzuki S."/>
            <person name="Tagami M."/>
            <person name="Waki K."/>
            <person name="Watahiki A."/>
            <person name="Okamura-Oho Y."/>
            <person name="Suzuki H."/>
            <person name="Kawai J."/>
            <person name="Hayashizaki Y."/>
        </authorList>
    </citation>
    <scope>NUCLEOTIDE SEQUENCE [LARGE SCALE MRNA]</scope>
    <source>
        <strain>C57BL/6J</strain>
        <strain>NOD</strain>
        <tissue>Bone</tissue>
        <tissue>Corpora quadrigemina</tissue>
        <tissue>Head</tissue>
        <tissue>Kidney</tissue>
        <tissue>Testis</tissue>
        <tissue>Thymus</tissue>
        <tissue>Urinary bladder</tissue>
    </source>
</reference>
<reference key="5">
    <citation type="submission" date="2005-07" db="EMBL/GenBank/DDBJ databases">
        <authorList>
            <person name="Mural R.J."/>
            <person name="Adams M.D."/>
            <person name="Myers E.W."/>
            <person name="Smith H.O."/>
            <person name="Venter J.C."/>
        </authorList>
    </citation>
    <scope>NUCLEOTIDE SEQUENCE [LARGE SCALE GENOMIC DNA]</scope>
</reference>
<reference key="6">
    <citation type="journal article" date="2004" name="Genome Res.">
        <title>The status, quality, and expansion of the NIH full-length cDNA project: the Mammalian Gene Collection (MGC).</title>
        <authorList>
            <consortium name="The MGC Project Team"/>
        </authorList>
    </citation>
    <scope>NUCLEOTIDE SEQUENCE [LARGE SCALE MRNA]</scope>
    <source>
        <strain>FVB/N</strain>
        <tissue>Kidney</tissue>
    </source>
</reference>
<reference key="7">
    <citation type="journal article" date="2009" name="Vet. Pathol.">
        <title>Ectonucleoside triphosphate diphosphohydrolase type 5 (Entpd5)-deficient mice develop progressive hepatopathy, hepatocellular tumors, and spermatogenic arrest.</title>
        <authorList>
            <person name="Read R."/>
            <person name="Hansen G."/>
            <person name="Kramer J."/>
            <person name="Finch R."/>
            <person name="Li L."/>
            <person name="Vogel P."/>
        </authorList>
    </citation>
    <scope>DISRUPTION PHENOTYPE</scope>
</reference>
<reference key="8">
    <citation type="journal article" date="2010" name="Cell">
        <title>A tissue-specific atlas of mouse protein phosphorylation and expression.</title>
        <authorList>
            <person name="Huttlin E.L."/>
            <person name="Jedrychowski M.P."/>
            <person name="Elias J.E."/>
            <person name="Goswami T."/>
            <person name="Rad R."/>
            <person name="Beausoleil S.A."/>
            <person name="Villen J."/>
            <person name="Haas W."/>
            <person name="Sowa M.E."/>
            <person name="Gygi S.P."/>
        </authorList>
    </citation>
    <scope>IDENTIFICATION BY MASS SPECTROMETRY [LARGE SCALE ANALYSIS]</scope>
    <source>
        <tissue>Brown adipose tissue</tissue>
        <tissue>Kidney</tissue>
        <tissue>Liver</tissue>
        <tissue>Lung</tissue>
        <tissue>Testis</tissue>
    </source>
</reference>
<reference key="9">
    <citation type="journal article" date="2010" name="Cell">
        <title>The ER UDPase ENTPD5 promotes protein N-glycosylation, the Warburg effect, and proliferation in the PTEN pathway.</title>
        <authorList>
            <person name="Fang M."/>
            <person name="Shen Z."/>
            <person name="Huang S."/>
            <person name="Zhao L."/>
            <person name="Chen S."/>
            <person name="Mak T.W."/>
            <person name="Wang X."/>
        </authorList>
    </citation>
    <scope>FUNCTION</scope>
    <scope>CATALYTIC ACTIVITY</scope>
    <scope>PATHWAY</scope>
    <scope>GLYCOSYLATION</scope>
    <scope>SUBCELLULAR LOCATION</scope>
    <scope>INDUCTION</scope>
    <scope>ACTIVE SITE</scope>
    <scope>MUTAGENESIS OF GLU-171</scope>
</reference>
<name>ENTP5_MOUSE</name>
<feature type="signal peptide" evidence="3">
    <location>
        <begin position="1"/>
        <end position="24"/>
    </location>
</feature>
<feature type="chain" id="PRO_0000019910" description="Ectonucleoside triphosphate diphosphohydrolase 5">
    <location>
        <begin position="25"/>
        <end position="427"/>
    </location>
</feature>
<feature type="active site" description="Proton acceptor" evidence="10">
    <location>
        <position position="171"/>
    </location>
</feature>
<feature type="glycosylation site" description="N-linked (GlcNAc...) asparagine" evidence="3">
    <location>
        <position position="231"/>
    </location>
</feature>
<feature type="disulfide bond" evidence="1">
    <location>
        <begin position="271"/>
        <end position="302"/>
    </location>
</feature>
<feature type="disulfide bond" evidence="1">
    <location>
        <begin position="362"/>
        <end position="376"/>
    </location>
</feature>
<feature type="mutagenesis site" description="Loss of nucleoside-diphosphatase activity." evidence="10">
    <original>E</original>
    <variation>A</variation>
    <location>
        <position position="171"/>
    </location>
</feature>
<feature type="sequence conflict" description="In Ref. 4; BAC27461." evidence="8" ref="4">
    <original>Q</original>
    <variation>K</variation>
    <location>
        <position position="218"/>
    </location>
</feature>
<feature type="sequence conflict" description="In Ref. 1; AAC05181." evidence="8" ref="1">
    <original>F</original>
    <variation>L</variation>
    <location>
        <position position="390"/>
    </location>
</feature>
<feature type="sequence conflict" description="In Ref. 1; AAC05181." evidence="8" ref="1">
    <original>DGTLLQLTKKVNNIETGWALGATFHLLQSLGITS</original>
    <variation>ERHPLTAHKESEQHRDWLGLGGHLSPAPVSGHHQLRPSSTSEACISEPVFSQEGVDSETFSDLSGKAWPETR</variation>
    <location>
        <begin position="394"/>
        <end position="427"/>
    </location>
</feature>
<comment type="function">
    <text evidence="4 6">Hydrolyzes nucleoside diphosphates with a preference for GDP, IDP and UDP compared to ADP and CDP (PubMed:10369669, PubMed:21074248). In the lumen of the endoplasmic reticulum, hydrolyzes UDP that acts as an end-product feedback inhibitor of the UDP-Glc:glycoprotein glucosyltransferases. UMP can be transported back by an UDP-sugar antiporter to the cytosol where it is consumed to regenerate UDP-glucose (PubMed:21074248). Therefore, it positively regulates protein reglucosylation by clearing UDP from the ER lumen and by promoting the regeneration of UDP-glucose (PubMed:21074248). Protein reglucosylation is essential to proper glycoprotein folding and quality control in the ER (PubMed:21074248).</text>
</comment>
<comment type="catalytic activity">
    <reaction evidence="4 6">
        <text>a ribonucleoside 5'-diphosphate + H2O = a ribonucleoside 5'-phosphate + phosphate + H(+)</text>
        <dbReference type="Rhea" id="RHEA:36799"/>
        <dbReference type="ChEBI" id="CHEBI:15377"/>
        <dbReference type="ChEBI" id="CHEBI:15378"/>
        <dbReference type="ChEBI" id="CHEBI:43474"/>
        <dbReference type="ChEBI" id="CHEBI:57930"/>
        <dbReference type="ChEBI" id="CHEBI:58043"/>
        <dbReference type="EC" id="3.6.1.6"/>
    </reaction>
    <physiologicalReaction direction="left-to-right" evidence="4">
        <dbReference type="Rhea" id="RHEA:36800"/>
    </physiologicalReaction>
</comment>
<comment type="catalytic activity">
    <reaction evidence="6">
        <text>GDP + H2O = GMP + phosphate + H(+)</text>
        <dbReference type="Rhea" id="RHEA:22156"/>
        <dbReference type="ChEBI" id="CHEBI:15377"/>
        <dbReference type="ChEBI" id="CHEBI:15378"/>
        <dbReference type="ChEBI" id="CHEBI:43474"/>
        <dbReference type="ChEBI" id="CHEBI:58115"/>
        <dbReference type="ChEBI" id="CHEBI:58189"/>
        <dbReference type="EC" id="3.6.1.6"/>
    </reaction>
    <physiologicalReaction direction="left-to-right" evidence="10">
        <dbReference type="Rhea" id="RHEA:22157"/>
    </physiologicalReaction>
</comment>
<comment type="catalytic activity">
    <reaction evidence="4 6">
        <text>UDP + H2O = UMP + phosphate + H(+)</text>
        <dbReference type="Rhea" id="RHEA:64876"/>
        <dbReference type="ChEBI" id="CHEBI:15377"/>
        <dbReference type="ChEBI" id="CHEBI:15378"/>
        <dbReference type="ChEBI" id="CHEBI:43474"/>
        <dbReference type="ChEBI" id="CHEBI:57865"/>
        <dbReference type="ChEBI" id="CHEBI:58223"/>
        <dbReference type="EC" id="3.6.1.6"/>
    </reaction>
    <physiologicalReaction direction="left-to-right" evidence="9">
        <dbReference type="Rhea" id="RHEA:64877"/>
    </physiologicalReaction>
</comment>
<comment type="catalytic activity">
    <reaction evidence="2">
        <text>IDP + H2O = IMP + phosphate + H(+)</text>
        <dbReference type="Rhea" id="RHEA:35207"/>
        <dbReference type="ChEBI" id="CHEBI:15377"/>
        <dbReference type="ChEBI" id="CHEBI:15378"/>
        <dbReference type="ChEBI" id="CHEBI:43474"/>
        <dbReference type="ChEBI" id="CHEBI:58053"/>
        <dbReference type="ChEBI" id="CHEBI:58280"/>
        <dbReference type="EC" id="3.6.1.6"/>
    </reaction>
    <physiologicalReaction direction="left-to-right" evidence="2">
        <dbReference type="Rhea" id="RHEA:35208"/>
    </physiologicalReaction>
</comment>
<comment type="catalytic activity">
    <reaction evidence="2">
        <text>CDP + H2O = CMP + phosphate + H(+)</text>
        <dbReference type="Rhea" id="RHEA:64880"/>
        <dbReference type="ChEBI" id="CHEBI:15377"/>
        <dbReference type="ChEBI" id="CHEBI:15378"/>
        <dbReference type="ChEBI" id="CHEBI:43474"/>
        <dbReference type="ChEBI" id="CHEBI:58069"/>
        <dbReference type="ChEBI" id="CHEBI:60377"/>
        <dbReference type="EC" id="3.6.1.6"/>
    </reaction>
    <physiologicalReaction direction="left-to-right" evidence="2">
        <dbReference type="Rhea" id="RHEA:64881"/>
    </physiologicalReaction>
</comment>
<comment type="catalytic activity">
    <reaction evidence="2">
        <text>ADP + H2O = AMP + phosphate + H(+)</text>
        <dbReference type="Rhea" id="RHEA:61436"/>
        <dbReference type="ChEBI" id="CHEBI:15377"/>
        <dbReference type="ChEBI" id="CHEBI:15378"/>
        <dbReference type="ChEBI" id="CHEBI:43474"/>
        <dbReference type="ChEBI" id="CHEBI:456215"/>
        <dbReference type="ChEBI" id="CHEBI:456216"/>
        <dbReference type="EC" id="3.6.1.6"/>
    </reaction>
    <physiologicalReaction direction="left-to-right" evidence="2">
        <dbReference type="Rhea" id="RHEA:61437"/>
    </physiologicalReaction>
</comment>
<comment type="cofactor">
    <cofactor evidence="4">
        <name>Ca(2+)</name>
        <dbReference type="ChEBI" id="CHEBI:29108"/>
    </cofactor>
    <cofactor evidence="4">
        <name>Mg(2+)</name>
        <dbReference type="ChEBI" id="CHEBI:18420"/>
    </cofactor>
</comment>
<comment type="biophysicochemical properties">
    <phDependence>
        <text evidence="4">Optimum pH is 7.</text>
    </phDependence>
</comment>
<comment type="pathway">
    <text evidence="10">Protein modification; protein glycosylation.</text>
</comment>
<comment type="subunit">
    <text evidence="2">Monomer; active form. Homodimer; disulfide-linked. Homodimers are enzymatically inactive.</text>
</comment>
<comment type="subcellular location">
    <subcellularLocation>
        <location evidence="4">Endoplasmic reticulum</location>
    </subcellularLocation>
    <subcellularLocation>
        <location evidence="2">Secreted</location>
    </subcellularLocation>
</comment>
<comment type="tissue specificity">
    <text evidence="4">Ubiquitous.</text>
</comment>
<comment type="induction">
    <text evidence="6">Expressed in response to phosphoinositide 3-kinase (PI3K) signaling. Activation of PI3K results in FOXO phosphorylation by AKT1 and loss of ENTPD5 transcriptional repression. Up-regulated in PTEN-deficient cells.</text>
</comment>
<comment type="PTM">
    <text evidence="4 6">N-glycosylated; high-mannose type.</text>
</comment>
<comment type="disruption phenotype">
    <text evidence="5">Mice display hepatopathy and aspermia. The hepatopathy is progressive and characterized by centrilobular hepatocyte hypertrophy, oval cell proliferation, bile staining of Kupffer cells, and hepatocyte degeneration with increasing incidence and severity of degenerative lesions, development of multiple foci of cellular alteration, and hepatocellular neoplasia with age.</text>
</comment>
<comment type="similarity">
    <text evidence="8">Belongs to the GDA1/CD39 NTPase family.</text>
</comment>
<gene>
    <name type="primary">Entpd5</name>
    <name type="synonym">Cd39l4</name>
</gene>
<organism>
    <name type="scientific">Mus musculus</name>
    <name type="common">Mouse</name>
    <dbReference type="NCBI Taxonomy" id="10090"/>
    <lineage>
        <taxon>Eukaryota</taxon>
        <taxon>Metazoa</taxon>
        <taxon>Chordata</taxon>
        <taxon>Craniata</taxon>
        <taxon>Vertebrata</taxon>
        <taxon>Euteleostomi</taxon>
        <taxon>Mammalia</taxon>
        <taxon>Eutheria</taxon>
        <taxon>Euarchontoglires</taxon>
        <taxon>Glires</taxon>
        <taxon>Rodentia</taxon>
        <taxon>Myomorpha</taxon>
        <taxon>Muroidea</taxon>
        <taxon>Muridae</taxon>
        <taxon>Murinae</taxon>
        <taxon>Mus</taxon>
        <taxon>Mus</taxon>
    </lineage>
</organism>
<accession>Q9WUZ9</accession>
<accession>O70214</accession>
<accession>Q544J4</accession>
<accession>Q8BR23</accession>
<accession>Q8CD29</accession>
<evidence type="ECO:0000250" key="1"/>
<evidence type="ECO:0000250" key="2">
    <source>
        <dbReference type="UniProtKB" id="O75356"/>
    </source>
</evidence>
<evidence type="ECO:0000255" key="3"/>
<evidence type="ECO:0000269" key="4">
    <source>
    </source>
</evidence>
<evidence type="ECO:0000269" key="5">
    <source>
    </source>
</evidence>
<evidence type="ECO:0000269" key="6">
    <source>
    </source>
</evidence>
<evidence type="ECO:0000303" key="7">
    <source>
    </source>
</evidence>
<evidence type="ECO:0000305" key="8"/>
<evidence type="ECO:0000305" key="9">
    <source>
    </source>
</evidence>
<evidence type="ECO:0000305" key="10">
    <source>
    </source>
</evidence>
<keyword id="KW-0106">Calcium</keyword>
<keyword id="KW-1015">Disulfide bond</keyword>
<keyword id="KW-0256">Endoplasmic reticulum</keyword>
<keyword id="KW-0325">Glycoprotein</keyword>
<keyword id="KW-0378">Hydrolase</keyword>
<keyword id="KW-0460">Magnesium</keyword>
<keyword id="KW-1185">Reference proteome</keyword>
<keyword id="KW-0964">Secreted</keyword>
<keyword id="KW-0732">Signal</keyword>
<dbReference type="EC" id="3.6.1.6" evidence="4 6"/>
<dbReference type="EMBL" id="AF006482">
    <property type="protein sequence ID" value="AAC05181.1"/>
    <property type="molecule type" value="mRNA"/>
</dbReference>
<dbReference type="EMBL" id="AJ238636">
    <property type="protein sequence ID" value="CAB45533.1"/>
    <property type="molecule type" value="mRNA"/>
</dbReference>
<dbReference type="EMBL" id="AF136571">
    <property type="protein sequence ID" value="AAK82949.1"/>
    <property type="molecule type" value="mRNA"/>
</dbReference>
<dbReference type="EMBL" id="AK002618">
    <property type="protein sequence ID" value="BAB22234.1"/>
    <property type="molecule type" value="mRNA"/>
</dbReference>
<dbReference type="EMBL" id="AK031581">
    <property type="protein sequence ID" value="BAC27461.1"/>
    <property type="molecule type" value="mRNA"/>
</dbReference>
<dbReference type="EMBL" id="AK036641">
    <property type="protein sequence ID" value="BAC29515.1"/>
    <property type="molecule type" value="mRNA"/>
</dbReference>
<dbReference type="EMBL" id="AK037736">
    <property type="protein sequence ID" value="BAC29861.1"/>
    <property type="molecule type" value="mRNA"/>
</dbReference>
<dbReference type="EMBL" id="AK045828">
    <property type="protein sequence ID" value="BAC32507.1"/>
    <property type="molecule type" value="mRNA"/>
</dbReference>
<dbReference type="EMBL" id="AK079267">
    <property type="protein sequence ID" value="BAC37592.1"/>
    <property type="molecule type" value="mRNA"/>
</dbReference>
<dbReference type="EMBL" id="AK080265">
    <property type="protein sequence ID" value="BAC37862.1"/>
    <property type="molecule type" value="mRNA"/>
</dbReference>
<dbReference type="EMBL" id="AK081435">
    <property type="protein sequence ID" value="BAC38219.1"/>
    <property type="molecule type" value="mRNA"/>
</dbReference>
<dbReference type="EMBL" id="AK088455">
    <property type="protein sequence ID" value="BAC40362.1"/>
    <property type="molecule type" value="mRNA"/>
</dbReference>
<dbReference type="EMBL" id="AK160950">
    <property type="protein sequence ID" value="BAE36110.1"/>
    <property type="molecule type" value="mRNA"/>
</dbReference>
<dbReference type="EMBL" id="CH466590">
    <property type="protein sequence ID" value="EDL02793.1"/>
    <property type="molecule type" value="Genomic_DNA"/>
</dbReference>
<dbReference type="EMBL" id="CH466590">
    <property type="protein sequence ID" value="EDL02796.1"/>
    <property type="molecule type" value="Genomic_DNA"/>
</dbReference>
<dbReference type="EMBL" id="CH466590">
    <property type="protein sequence ID" value="EDL02797.1"/>
    <property type="molecule type" value="Genomic_DNA"/>
</dbReference>
<dbReference type="EMBL" id="BC015247">
    <property type="protein sequence ID" value="AAH15247.1"/>
    <property type="molecule type" value="mRNA"/>
</dbReference>
<dbReference type="CCDS" id="CCDS26045.1"/>
<dbReference type="RefSeq" id="NP_001021385.1">
    <property type="nucleotide sequence ID" value="NM_001026214.2"/>
</dbReference>
<dbReference type="RefSeq" id="NP_001272978.1">
    <property type="nucleotide sequence ID" value="NM_001286049.1"/>
</dbReference>
<dbReference type="RefSeq" id="NP_001272987.1">
    <property type="nucleotide sequence ID" value="NM_001286058.1"/>
</dbReference>
<dbReference type="RefSeq" id="NP_031673.2">
    <property type="nucleotide sequence ID" value="NM_007647.3"/>
</dbReference>
<dbReference type="RefSeq" id="XP_030102393.1">
    <property type="nucleotide sequence ID" value="XM_030246533.1"/>
</dbReference>
<dbReference type="RefSeq" id="XP_036013067.1">
    <property type="nucleotide sequence ID" value="XM_036157174.1"/>
</dbReference>
<dbReference type="SMR" id="Q9WUZ9"/>
<dbReference type="FunCoup" id="Q9WUZ9">
    <property type="interactions" value="1119"/>
</dbReference>
<dbReference type="STRING" id="10090.ENSMUSP00000071939"/>
<dbReference type="ChEMBL" id="CHEMBL4523501"/>
<dbReference type="GlyCosmos" id="Q9WUZ9">
    <property type="glycosylation" value="1 site, No reported glycans"/>
</dbReference>
<dbReference type="GlyGen" id="Q9WUZ9">
    <property type="glycosylation" value="3 sites, 1 N-linked glycan (1 site), 1 O-linked glycan (1 site)"/>
</dbReference>
<dbReference type="iPTMnet" id="Q9WUZ9"/>
<dbReference type="PhosphoSitePlus" id="Q9WUZ9"/>
<dbReference type="SwissPalm" id="Q9WUZ9"/>
<dbReference type="jPOST" id="Q9WUZ9"/>
<dbReference type="PaxDb" id="10090-ENSMUSP00000071939"/>
<dbReference type="ProteomicsDB" id="277878"/>
<dbReference type="Pumba" id="Q9WUZ9"/>
<dbReference type="Antibodypedia" id="148">
    <property type="antibodies" value="256 antibodies from 31 providers"/>
</dbReference>
<dbReference type="DNASU" id="12499"/>
<dbReference type="Ensembl" id="ENSMUST00000021662.12">
    <property type="protein sequence ID" value="ENSMUSP00000021662.6"/>
    <property type="gene ID" value="ENSMUSG00000021236.17"/>
</dbReference>
<dbReference type="Ensembl" id="ENSMUST00000110272.9">
    <property type="protein sequence ID" value="ENSMUSP00000105901.3"/>
    <property type="gene ID" value="ENSMUSG00000021236.17"/>
</dbReference>
<dbReference type="Ensembl" id="ENSMUST00000117286.2">
    <property type="protein sequence ID" value="ENSMUSP00000114011.2"/>
    <property type="gene ID" value="ENSMUSG00000021236.17"/>
</dbReference>
<dbReference type="Ensembl" id="ENSMUST00000120942.8">
    <property type="protein sequence ID" value="ENSMUSP00000112516.2"/>
    <property type="gene ID" value="ENSMUSG00000021236.17"/>
</dbReference>
<dbReference type="Ensembl" id="ENSMUST00000122194.8">
    <property type="protein sequence ID" value="ENSMUSP00000113106.2"/>
    <property type="gene ID" value="ENSMUSG00000021236.17"/>
</dbReference>
<dbReference type="GeneID" id="12499"/>
<dbReference type="KEGG" id="mmu:12499"/>
<dbReference type="UCSC" id="uc007ofd.2">
    <property type="organism name" value="mouse"/>
</dbReference>
<dbReference type="AGR" id="MGI:1321385"/>
<dbReference type="CTD" id="957"/>
<dbReference type="MGI" id="MGI:1321385">
    <property type="gene designation" value="Entpd5"/>
</dbReference>
<dbReference type="VEuPathDB" id="HostDB:ENSMUSG00000021236"/>
<dbReference type="eggNOG" id="KOG1385">
    <property type="taxonomic scope" value="Eukaryota"/>
</dbReference>
<dbReference type="GeneTree" id="ENSGT01110000267162"/>
<dbReference type="HOGENOM" id="CLU_010246_0_2_1"/>
<dbReference type="InParanoid" id="Q9WUZ9"/>
<dbReference type="OMA" id="WTCRIKE"/>
<dbReference type="OrthoDB" id="6372431at2759"/>
<dbReference type="Reactome" id="R-MMU-8850843">
    <property type="pathway name" value="Phosphate bond hydrolysis by NTPDase proteins"/>
</dbReference>
<dbReference type="UniPathway" id="UPA00378"/>
<dbReference type="BioGRID-ORCS" id="12499">
    <property type="hits" value="4 hits in 77 CRISPR screens"/>
</dbReference>
<dbReference type="ChiTaRS" id="Entpd5">
    <property type="organism name" value="mouse"/>
</dbReference>
<dbReference type="PRO" id="PR:Q9WUZ9"/>
<dbReference type="Proteomes" id="UP000000589">
    <property type="component" value="Chromosome 12"/>
</dbReference>
<dbReference type="RNAct" id="Q9WUZ9">
    <property type="molecule type" value="protein"/>
</dbReference>
<dbReference type="Bgee" id="ENSMUSG00000021236">
    <property type="expression patterns" value="Expressed in proximal tubule and 256 other cell types or tissues"/>
</dbReference>
<dbReference type="ExpressionAtlas" id="Q9WUZ9">
    <property type="expression patterns" value="baseline and differential"/>
</dbReference>
<dbReference type="GO" id="GO:0005783">
    <property type="term" value="C:endoplasmic reticulum"/>
    <property type="evidence" value="ECO:0000314"/>
    <property type="project" value="UniProtKB"/>
</dbReference>
<dbReference type="GO" id="GO:0005615">
    <property type="term" value="C:extracellular space"/>
    <property type="evidence" value="ECO:0007669"/>
    <property type="project" value="Ensembl"/>
</dbReference>
<dbReference type="GO" id="GO:0043262">
    <property type="term" value="F:ADP phosphatase activity"/>
    <property type="evidence" value="ECO:0007669"/>
    <property type="project" value="Ensembl"/>
</dbReference>
<dbReference type="GO" id="GO:0036384">
    <property type="term" value="F:CDP phosphatase activity"/>
    <property type="evidence" value="ECO:0007669"/>
    <property type="project" value="Ensembl"/>
</dbReference>
<dbReference type="GO" id="GO:0004382">
    <property type="term" value="F:GDP phosphatase activity"/>
    <property type="evidence" value="ECO:0000314"/>
    <property type="project" value="UniProtKB"/>
</dbReference>
<dbReference type="GO" id="GO:1990003">
    <property type="term" value="F:IDP phosphatase activity"/>
    <property type="evidence" value="ECO:0007669"/>
    <property type="project" value="Ensembl"/>
</dbReference>
<dbReference type="GO" id="GO:0045134">
    <property type="term" value="F:UDP phosphatase activity"/>
    <property type="evidence" value="ECO:0000314"/>
    <property type="project" value="UniProtKB"/>
</dbReference>
<dbReference type="GO" id="GO:0051084">
    <property type="term" value="P:'de novo' post-translational protein folding"/>
    <property type="evidence" value="ECO:0000315"/>
    <property type="project" value="UniProtKB"/>
</dbReference>
<dbReference type="GO" id="GO:0006487">
    <property type="term" value="P:protein N-linked glycosylation"/>
    <property type="evidence" value="ECO:0000315"/>
    <property type="project" value="UniProtKB"/>
</dbReference>
<dbReference type="GO" id="GO:0006256">
    <property type="term" value="P:UDP catabolic process"/>
    <property type="evidence" value="ECO:0000314"/>
    <property type="project" value="UniProtKB"/>
</dbReference>
<dbReference type="GO" id="GO:0006011">
    <property type="term" value="P:UDP-alpha-D-glucose metabolic process"/>
    <property type="evidence" value="ECO:0000315"/>
    <property type="project" value="UniProtKB"/>
</dbReference>
<dbReference type="CDD" id="cd24114">
    <property type="entry name" value="ASKHA_NBD_NTPDase5"/>
    <property type="match status" value="1"/>
</dbReference>
<dbReference type="FunFam" id="3.30.420.150:FF:000004">
    <property type="entry name" value="Ectonucleoside triphosphate diphosphohydrolase 5"/>
    <property type="match status" value="1"/>
</dbReference>
<dbReference type="FunFam" id="3.30.420.40:FF:000052">
    <property type="entry name" value="Ectonucleoside triphosphate diphosphohydrolase 5"/>
    <property type="match status" value="1"/>
</dbReference>
<dbReference type="Gene3D" id="3.30.420.40">
    <property type="match status" value="1"/>
</dbReference>
<dbReference type="Gene3D" id="3.30.420.150">
    <property type="entry name" value="Exopolyphosphatase. Domain 2"/>
    <property type="match status" value="1"/>
</dbReference>
<dbReference type="InterPro" id="IPR000407">
    <property type="entry name" value="GDA1_CD39_NTPase"/>
</dbReference>
<dbReference type="PANTHER" id="PTHR11782">
    <property type="entry name" value="ADENOSINE/GUANOSINE DIPHOSPHATASE"/>
    <property type="match status" value="1"/>
</dbReference>
<dbReference type="PANTHER" id="PTHR11782:SF35">
    <property type="entry name" value="NUCLEOSIDE DIPHOSPHATE PHOSPHATASE ENTPD5"/>
    <property type="match status" value="1"/>
</dbReference>
<dbReference type="Pfam" id="PF01150">
    <property type="entry name" value="GDA1_CD39"/>
    <property type="match status" value="1"/>
</dbReference>
<dbReference type="PROSITE" id="PS01238">
    <property type="entry name" value="GDA1_CD39_NTPASE"/>
    <property type="match status" value="1"/>
</dbReference>
<proteinExistence type="evidence at protein level"/>
<sequence length="427" mass="47102">MATSWGAVFMLIIACVGSTVFYREQQTWFEGVFLSSMCPINVSAGTFYGIMFDAGSTGTRIHVYTFVQKTAGQLPFLEGEIFDSVKPGLSAFVDQPKQGAETVQELLEVAKDSIPRSHWERTPVVLKATAGLRLLPEQKAQALLLEVEEIFKNSPFLVPDGSVSIMDGSYEGILAWVTVNFLTGQLHGRGQETVGTLDLGGASTQITFLPQFEKTLEQTPRGYLTSFEMFNSTFKLYTHSYLGFGLKAARLATLGALEAKGTDGHTFRSACLPRWLEAEWIFGGVKYQYGGNQEGEMGFEPCYAEVLRVVQGKLHQPEEVRGSAFYAFSYYYDRAADTHLIDYEKGGVLKVEDFERKAREVCDNLGSFSSGSPFLCMDLTYITALLKDGFGFADGTLLQLTKKVNNIETGWALGATFHLLQSLGITS</sequence>